<organism>
    <name type="scientific">Varicella-zoster virus (strain Dumas)</name>
    <name type="common">HHV-3</name>
    <name type="synonym">Human herpesvirus 3</name>
    <dbReference type="NCBI Taxonomy" id="10338"/>
    <lineage>
        <taxon>Viruses</taxon>
        <taxon>Duplodnaviria</taxon>
        <taxon>Heunggongvirae</taxon>
        <taxon>Peploviricota</taxon>
        <taxon>Herviviricetes</taxon>
        <taxon>Herpesvirales</taxon>
        <taxon>Orthoherpesviridae</taxon>
        <taxon>Alphaherpesvirinae</taxon>
        <taxon>Varicellovirus</taxon>
        <taxon>Varicellovirus humanalpha3</taxon>
        <taxon>Human herpesvirus 3</taxon>
    </lineage>
</organism>
<sequence>MFSELPPSVPTALLQWGWGLHRGPCSIPNFKQVASQHSVQNDFTENSVDANEKFPIGHAGCIEKTKDDYVPFDTLFMVSSIDELGRRQLTDTIRRSLVMNACEITVACTKTAAFSGRGVSRQKHVTLSKNKFNPSSHKSLQMFVLCQKTHAPRVRNLLYESIRARRPRRYYTRSTDGKSRPLVPVFVYEFTALDRVLLHKENTLTDQPINTENSGHGRTRT</sequence>
<comment type="subcellular location">
    <subcellularLocation>
        <location evidence="1">Host nucleus</location>
    </subcellularLocation>
</comment>
<comment type="PTM">
    <text evidence="1">Phosphorylated.</text>
</comment>
<comment type="similarity">
    <text evidence="2">Belongs to the alphaherpesvirinae HHV-1 UL3 family.</text>
</comment>
<name>NP03_VZVD</name>
<evidence type="ECO:0000250" key="1"/>
<evidence type="ECO:0000305" key="2"/>
<accession>P09306</accession>
<proteinExistence type="inferred from homology"/>
<keyword id="KW-1048">Host nucleus</keyword>
<keyword id="KW-0597">Phosphoprotein</keyword>
<keyword id="KW-1185">Reference proteome</keyword>
<organismHost>
    <name type="scientific">Homo sapiens</name>
    <name type="common">Human</name>
    <dbReference type="NCBI Taxonomy" id="9606"/>
</organismHost>
<reference key="1">
    <citation type="journal article" date="1986" name="J. Gen. Virol.">
        <title>The complete DNA sequence of varicella-zoster virus.</title>
        <authorList>
            <person name="Davison A.J."/>
            <person name="Scott J.E."/>
        </authorList>
    </citation>
    <scope>NUCLEOTIDE SEQUENCE [LARGE SCALE GENOMIC DNA]</scope>
</reference>
<feature type="chain" id="PRO_0000115897" description="Nuclear phosphoprotein UL3 homolog">
    <location>
        <begin position="1"/>
        <end position="221"/>
    </location>
</feature>
<gene>
    <name type="ORF">ORF58</name>
</gene>
<dbReference type="EMBL" id="X04370">
    <property type="protein sequence ID" value="CAA27941.1"/>
    <property type="molecule type" value="Genomic_DNA"/>
</dbReference>
<dbReference type="PIR" id="F27215">
    <property type="entry name" value="WZBE58"/>
</dbReference>
<dbReference type="Proteomes" id="UP000002602">
    <property type="component" value="Genome"/>
</dbReference>
<dbReference type="GO" id="GO:0042025">
    <property type="term" value="C:host cell nucleus"/>
    <property type="evidence" value="ECO:0007669"/>
    <property type="project" value="UniProtKB-SubCell"/>
</dbReference>
<dbReference type="InterPro" id="IPR005035">
    <property type="entry name" value="Herpes_UL3"/>
</dbReference>
<dbReference type="Pfam" id="PF03369">
    <property type="entry name" value="Herpes_UL3"/>
    <property type="match status" value="1"/>
</dbReference>
<protein>
    <recommendedName>
        <fullName>Nuclear phosphoprotein UL3 homolog</fullName>
    </recommendedName>
    <alternativeName>
        <fullName>ORF58 protein</fullName>
    </alternativeName>
</protein>